<accession>Q2S904</accession>
<reference key="1">
    <citation type="journal article" date="2005" name="Nucleic Acids Res.">
        <title>Genomic blueprint of Hahella chejuensis, a marine microbe producing an algicidal agent.</title>
        <authorList>
            <person name="Jeong H."/>
            <person name="Yim J.H."/>
            <person name="Lee C."/>
            <person name="Choi S.-H."/>
            <person name="Park Y.K."/>
            <person name="Yoon S.H."/>
            <person name="Hur C.-G."/>
            <person name="Kang H.-Y."/>
            <person name="Kim D."/>
            <person name="Lee H.H."/>
            <person name="Park K.H."/>
            <person name="Park S.-H."/>
            <person name="Park H.-S."/>
            <person name="Lee H.K."/>
            <person name="Oh T.K."/>
            <person name="Kim J.F."/>
        </authorList>
    </citation>
    <scope>NUCLEOTIDE SEQUENCE [LARGE SCALE GENOMIC DNA]</scope>
    <source>
        <strain>KCTC 2396</strain>
    </source>
</reference>
<keyword id="KW-1185">Reference proteome</keyword>
<keyword id="KW-0687">Ribonucleoprotein</keyword>
<keyword id="KW-0689">Ribosomal protein</keyword>
<gene>
    <name evidence="1" type="primary">rplL</name>
    <name type="ordered locus">HCH_06225</name>
</gene>
<proteinExistence type="inferred from homology"/>
<organism>
    <name type="scientific">Hahella chejuensis (strain KCTC 2396)</name>
    <dbReference type="NCBI Taxonomy" id="349521"/>
    <lineage>
        <taxon>Bacteria</taxon>
        <taxon>Pseudomonadati</taxon>
        <taxon>Pseudomonadota</taxon>
        <taxon>Gammaproteobacteria</taxon>
        <taxon>Oceanospirillales</taxon>
        <taxon>Hahellaceae</taxon>
        <taxon>Hahella</taxon>
    </lineage>
</organism>
<comment type="function">
    <text evidence="1">Forms part of the ribosomal stalk which helps the ribosome interact with GTP-bound translation factors. Is thus essential for accurate translation.</text>
</comment>
<comment type="subunit">
    <text evidence="1">Homodimer. Part of the ribosomal stalk of the 50S ribosomal subunit. Forms a multimeric L10(L12)X complex, where L10 forms an elongated spine to which 2 to 4 L12 dimers bind in a sequential fashion. Binds GTP-bound translation factors.</text>
</comment>
<comment type="similarity">
    <text evidence="1">Belongs to the bacterial ribosomal protein bL12 family.</text>
</comment>
<protein>
    <recommendedName>
        <fullName evidence="1">Large ribosomal subunit protein bL12</fullName>
    </recommendedName>
    <alternativeName>
        <fullName evidence="3">50S ribosomal protein L7/L12</fullName>
    </alternativeName>
</protein>
<evidence type="ECO:0000255" key="1">
    <source>
        <dbReference type="HAMAP-Rule" id="MF_00368"/>
    </source>
</evidence>
<evidence type="ECO:0000256" key="2">
    <source>
        <dbReference type="SAM" id="MobiDB-lite"/>
    </source>
</evidence>
<evidence type="ECO:0000305" key="3"/>
<dbReference type="EMBL" id="CP000155">
    <property type="protein sequence ID" value="ABC32870.1"/>
    <property type="molecule type" value="Genomic_DNA"/>
</dbReference>
<dbReference type="RefSeq" id="WP_011399928.1">
    <property type="nucleotide sequence ID" value="NC_007645.1"/>
</dbReference>
<dbReference type="SMR" id="Q2S904"/>
<dbReference type="STRING" id="349521.HCH_06225"/>
<dbReference type="KEGG" id="hch:HCH_06225"/>
<dbReference type="eggNOG" id="COG0222">
    <property type="taxonomic scope" value="Bacteria"/>
</dbReference>
<dbReference type="HOGENOM" id="CLU_086499_3_2_6"/>
<dbReference type="OrthoDB" id="9811748at2"/>
<dbReference type="Proteomes" id="UP000000238">
    <property type="component" value="Chromosome"/>
</dbReference>
<dbReference type="GO" id="GO:0022625">
    <property type="term" value="C:cytosolic large ribosomal subunit"/>
    <property type="evidence" value="ECO:0007669"/>
    <property type="project" value="TreeGrafter"/>
</dbReference>
<dbReference type="GO" id="GO:0003729">
    <property type="term" value="F:mRNA binding"/>
    <property type="evidence" value="ECO:0007669"/>
    <property type="project" value="TreeGrafter"/>
</dbReference>
<dbReference type="GO" id="GO:0003735">
    <property type="term" value="F:structural constituent of ribosome"/>
    <property type="evidence" value="ECO:0007669"/>
    <property type="project" value="InterPro"/>
</dbReference>
<dbReference type="GO" id="GO:0006412">
    <property type="term" value="P:translation"/>
    <property type="evidence" value="ECO:0007669"/>
    <property type="project" value="UniProtKB-UniRule"/>
</dbReference>
<dbReference type="CDD" id="cd00387">
    <property type="entry name" value="Ribosomal_L7_L12"/>
    <property type="match status" value="1"/>
</dbReference>
<dbReference type="FunFam" id="3.30.1390.10:FF:000001">
    <property type="entry name" value="50S ribosomal protein L7/L12"/>
    <property type="match status" value="1"/>
</dbReference>
<dbReference type="Gene3D" id="3.30.1390.10">
    <property type="match status" value="1"/>
</dbReference>
<dbReference type="Gene3D" id="1.20.5.710">
    <property type="entry name" value="Single helix bin"/>
    <property type="match status" value="1"/>
</dbReference>
<dbReference type="HAMAP" id="MF_00368">
    <property type="entry name" value="Ribosomal_bL12"/>
    <property type="match status" value="1"/>
</dbReference>
<dbReference type="InterPro" id="IPR000206">
    <property type="entry name" value="Ribosomal_bL12"/>
</dbReference>
<dbReference type="InterPro" id="IPR013823">
    <property type="entry name" value="Ribosomal_bL12_C"/>
</dbReference>
<dbReference type="InterPro" id="IPR014719">
    <property type="entry name" value="Ribosomal_bL12_C/ClpS-like"/>
</dbReference>
<dbReference type="InterPro" id="IPR008932">
    <property type="entry name" value="Ribosomal_bL12_oligo"/>
</dbReference>
<dbReference type="InterPro" id="IPR036235">
    <property type="entry name" value="Ribosomal_bL12_oligo_N_sf"/>
</dbReference>
<dbReference type="NCBIfam" id="TIGR00855">
    <property type="entry name" value="L12"/>
    <property type="match status" value="1"/>
</dbReference>
<dbReference type="PANTHER" id="PTHR45987">
    <property type="entry name" value="39S RIBOSOMAL PROTEIN L12"/>
    <property type="match status" value="1"/>
</dbReference>
<dbReference type="PANTHER" id="PTHR45987:SF4">
    <property type="entry name" value="LARGE RIBOSOMAL SUBUNIT PROTEIN BL12M"/>
    <property type="match status" value="1"/>
</dbReference>
<dbReference type="Pfam" id="PF00542">
    <property type="entry name" value="Ribosomal_L12"/>
    <property type="match status" value="1"/>
</dbReference>
<dbReference type="Pfam" id="PF16320">
    <property type="entry name" value="Ribosomal_L12_N"/>
    <property type="match status" value="1"/>
</dbReference>
<dbReference type="SUPFAM" id="SSF54736">
    <property type="entry name" value="ClpS-like"/>
    <property type="match status" value="1"/>
</dbReference>
<dbReference type="SUPFAM" id="SSF48300">
    <property type="entry name" value="Ribosomal protein L7/12, oligomerisation (N-terminal) domain"/>
    <property type="match status" value="1"/>
</dbReference>
<sequence length="124" mass="12755">MALSKDDILNAIAEMSVMDVVALVEAMEEKFGVSAAAAVAVAAAPAADAAAVEEKTEFDVVLQSAGEKKVNVIKVVRGITGLGLKEAKDLVDGAPSTVKEALSKDDAEKAKKELEEAGATVELK</sequence>
<name>RL7_HAHCH</name>
<feature type="chain" id="PRO_0000243432" description="Large ribosomal subunit protein bL12">
    <location>
        <begin position="1"/>
        <end position="124"/>
    </location>
</feature>
<feature type="region of interest" description="Disordered" evidence="2">
    <location>
        <begin position="101"/>
        <end position="124"/>
    </location>
</feature>
<feature type="compositionally biased region" description="Basic and acidic residues" evidence="2">
    <location>
        <begin position="101"/>
        <end position="115"/>
    </location>
</feature>